<organism>
    <name type="scientific">Francisella tularensis subsp. holarctica (strain FTNF002-00 / FTA)</name>
    <dbReference type="NCBI Taxonomy" id="458234"/>
    <lineage>
        <taxon>Bacteria</taxon>
        <taxon>Pseudomonadati</taxon>
        <taxon>Pseudomonadota</taxon>
        <taxon>Gammaproteobacteria</taxon>
        <taxon>Thiotrichales</taxon>
        <taxon>Francisellaceae</taxon>
        <taxon>Francisella</taxon>
    </lineage>
</organism>
<name>YBEY_FRATF</name>
<gene>
    <name evidence="1" type="primary">ybeY</name>
    <name type="ordered locus">FTA_0935</name>
</gene>
<feature type="chain" id="PRO_1000070931" description="Endoribonuclease YbeY">
    <location>
        <begin position="1"/>
        <end position="162"/>
    </location>
</feature>
<feature type="binding site" evidence="1">
    <location>
        <position position="117"/>
    </location>
    <ligand>
        <name>Zn(2+)</name>
        <dbReference type="ChEBI" id="CHEBI:29105"/>
        <note>catalytic</note>
    </ligand>
</feature>
<feature type="binding site" evidence="1">
    <location>
        <position position="121"/>
    </location>
    <ligand>
        <name>Zn(2+)</name>
        <dbReference type="ChEBI" id="CHEBI:29105"/>
        <note>catalytic</note>
    </ligand>
</feature>
<feature type="binding site" evidence="1">
    <location>
        <position position="127"/>
    </location>
    <ligand>
        <name>Zn(2+)</name>
        <dbReference type="ChEBI" id="CHEBI:29105"/>
        <note>catalytic</note>
    </ligand>
</feature>
<accession>A7NBQ8</accession>
<evidence type="ECO:0000255" key="1">
    <source>
        <dbReference type="HAMAP-Rule" id="MF_00009"/>
    </source>
</evidence>
<proteinExistence type="inferred from homology"/>
<dbReference type="EC" id="3.1.-.-" evidence="1"/>
<dbReference type="EMBL" id="CP000803">
    <property type="protein sequence ID" value="ABU61411.1"/>
    <property type="molecule type" value="Genomic_DNA"/>
</dbReference>
<dbReference type="RefSeq" id="WP_010031277.1">
    <property type="nucleotide sequence ID" value="NC_009749.1"/>
</dbReference>
<dbReference type="SMR" id="A7NBQ8"/>
<dbReference type="KEGG" id="fta:FTA_0935"/>
<dbReference type="HOGENOM" id="CLU_106710_3_3_6"/>
<dbReference type="GO" id="GO:0005737">
    <property type="term" value="C:cytoplasm"/>
    <property type="evidence" value="ECO:0007669"/>
    <property type="project" value="UniProtKB-SubCell"/>
</dbReference>
<dbReference type="GO" id="GO:0004222">
    <property type="term" value="F:metalloendopeptidase activity"/>
    <property type="evidence" value="ECO:0007669"/>
    <property type="project" value="InterPro"/>
</dbReference>
<dbReference type="GO" id="GO:0004521">
    <property type="term" value="F:RNA endonuclease activity"/>
    <property type="evidence" value="ECO:0007669"/>
    <property type="project" value="UniProtKB-UniRule"/>
</dbReference>
<dbReference type="GO" id="GO:0008270">
    <property type="term" value="F:zinc ion binding"/>
    <property type="evidence" value="ECO:0007669"/>
    <property type="project" value="UniProtKB-UniRule"/>
</dbReference>
<dbReference type="GO" id="GO:0006364">
    <property type="term" value="P:rRNA processing"/>
    <property type="evidence" value="ECO:0007669"/>
    <property type="project" value="UniProtKB-UniRule"/>
</dbReference>
<dbReference type="Gene3D" id="3.40.390.30">
    <property type="entry name" value="Metalloproteases ('zincins'), catalytic domain"/>
    <property type="match status" value="1"/>
</dbReference>
<dbReference type="HAMAP" id="MF_00009">
    <property type="entry name" value="Endoribonucl_YbeY"/>
    <property type="match status" value="1"/>
</dbReference>
<dbReference type="InterPro" id="IPR023091">
    <property type="entry name" value="MetalPrtase_cat_dom_sf_prd"/>
</dbReference>
<dbReference type="InterPro" id="IPR002036">
    <property type="entry name" value="YbeY"/>
</dbReference>
<dbReference type="InterPro" id="IPR020549">
    <property type="entry name" value="YbeY_CS"/>
</dbReference>
<dbReference type="NCBIfam" id="TIGR00043">
    <property type="entry name" value="rRNA maturation RNase YbeY"/>
    <property type="match status" value="1"/>
</dbReference>
<dbReference type="PANTHER" id="PTHR46986">
    <property type="entry name" value="ENDORIBONUCLEASE YBEY, CHLOROPLASTIC"/>
    <property type="match status" value="1"/>
</dbReference>
<dbReference type="PANTHER" id="PTHR46986:SF1">
    <property type="entry name" value="ENDORIBONUCLEASE YBEY, CHLOROPLASTIC"/>
    <property type="match status" value="1"/>
</dbReference>
<dbReference type="Pfam" id="PF02130">
    <property type="entry name" value="YbeY"/>
    <property type="match status" value="1"/>
</dbReference>
<dbReference type="SUPFAM" id="SSF55486">
    <property type="entry name" value="Metalloproteases ('zincins'), catalytic domain"/>
    <property type="match status" value="1"/>
</dbReference>
<dbReference type="PROSITE" id="PS01306">
    <property type="entry name" value="UPF0054"/>
    <property type="match status" value="1"/>
</dbReference>
<protein>
    <recommendedName>
        <fullName evidence="1">Endoribonuclease YbeY</fullName>
        <ecNumber evidence="1">3.1.-.-</ecNumber>
    </recommendedName>
</protein>
<comment type="function">
    <text evidence="1">Single strand-specific metallo-endoribonuclease involved in late-stage 70S ribosome quality control and in maturation of the 3' terminus of the 16S rRNA.</text>
</comment>
<comment type="cofactor">
    <cofactor evidence="1">
        <name>Zn(2+)</name>
        <dbReference type="ChEBI" id="CHEBI:29105"/>
    </cofactor>
    <text evidence="1">Binds 1 zinc ion.</text>
</comment>
<comment type="subcellular location">
    <subcellularLocation>
        <location evidence="1">Cytoplasm</location>
    </subcellularLocation>
</comment>
<comment type="similarity">
    <text evidence="1">Belongs to the endoribonuclease YbeY family.</text>
</comment>
<sequence length="162" mass="18642">MDNLNINFINDDEHPIPSQDLLLKCLQLVADKHHISHAEVNLNIVSNDEIQQINKQFRNKDKPTNIISFEFEKPQGLPDDIANDFLGDIVIAPAVLENEAKEQNKEINDHWQHIFIHGLLHLLGYDHQDDQEAEVMENLEIQLLAQLGIANPYIEQENQNGR</sequence>
<keyword id="KW-0963">Cytoplasm</keyword>
<keyword id="KW-0255">Endonuclease</keyword>
<keyword id="KW-0378">Hydrolase</keyword>
<keyword id="KW-0479">Metal-binding</keyword>
<keyword id="KW-0540">Nuclease</keyword>
<keyword id="KW-0690">Ribosome biogenesis</keyword>
<keyword id="KW-0698">rRNA processing</keyword>
<keyword id="KW-0862">Zinc</keyword>
<reference key="1">
    <citation type="journal article" date="2009" name="PLoS ONE">
        <title>Complete genome sequence of Francisella tularensis subspecies holarctica FTNF002-00.</title>
        <authorList>
            <person name="Barabote R.D."/>
            <person name="Xie G."/>
            <person name="Brettin T.S."/>
            <person name="Hinrichs S.H."/>
            <person name="Fey P.D."/>
            <person name="Jay J.J."/>
            <person name="Engle J.L."/>
            <person name="Godbole S.D."/>
            <person name="Noronha J.M."/>
            <person name="Scheuermann R.H."/>
            <person name="Zhou L.W."/>
            <person name="Lion C."/>
            <person name="Dempsey M.P."/>
        </authorList>
    </citation>
    <scope>NUCLEOTIDE SEQUENCE [LARGE SCALE GENOMIC DNA]</scope>
    <source>
        <strain>FTNF002-00 / FTA</strain>
    </source>
</reference>